<evidence type="ECO:0000255" key="1">
    <source>
        <dbReference type="HAMAP-Rule" id="MF_00770"/>
    </source>
</evidence>
<comment type="function">
    <text evidence="1">Catalyzes the reversible cleavage of L-rhamnulose-1-phosphate to dihydroxyacetone phosphate (DHAP) and L-lactaldehyde.</text>
</comment>
<comment type="catalytic activity">
    <reaction evidence="1">
        <text>L-rhamnulose 1-phosphate = (S)-lactaldehyde + dihydroxyacetone phosphate</text>
        <dbReference type="Rhea" id="RHEA:19689"/>
        <dbReference type="ChEBI" id="CHEBI:18041"/>
        <dbReference type="ChEBI" id="CHEBI:57642"/>
        <dbReference type="ChEBI" id="CHEBI:58313"/>
        <dbReference type="EC" id="4.1.2.19"/>
    </reaction>
</comment>
<comment type="cofactor">
    <cofactor evidence="1">
        <name>Zn(2+)</name>
        <dbReference type="ChEBI" id="CHEBI:29105"/>
    </cofactor>
    <text evidence="1">Binds 1 zinc ion per subunit.</text>
</comment>
<comment type="pathway">
    <text evidence="1">Carbohydrate degradation; L-rhamnose degradation; glycerone phosphate from L-rhamnose: step 3/3.</text>
</comment>
<comment type="subunit">
    <text evidence="1">Homotetramer.</text>
</comment>
<comment type="subcellular location">
    <subcellularLocation>
        <location evidence="1">Cytoplasm</location>
    </subcellularLocation>
</comment>
<comment type="similarity">
    <text evidence="1">Belongs to the aldolase class II family. RhaD subfamily.</text>
</comment>
<organism>
    <name type="scientific">Escherichia coli O17:K52:H18 (strain UMN026 / ExPEC)</name>
    <dbReference type="NCBI Taxonomy" id="585056"/>
    <lineage>
        <taxon>Bacteria</taxon>
        <taxon>Pseudomonadati</taxon>
        <taxon>Pseudomonadota</taxon>
        <taxon>Gammaproteobacteria</taxon>
        <taxon>Enterobacterales</taxon>
        <taxon>Enterobacteriaceae</taxon>
        <taxon>Escherichia</taxon>
    </lineage>
</organism>
<sequence>MQNITQSWFVQGMIKATTDAWLKGWDERNGGNLTLRLDDADIAPYHDNFHAQPRYIPLSQPMPLLANTPFIVTGSGKFFRNVQLDPAANLGVVKVDSDGAGYHILWGLTHEAVPTSELPAHFLSHCERIKATNGKDRVIMHCHATNLIALTYVLENDTAVFTRQLWEGSTECLVVFPDGVGILPWMVPGTDEIGQATAQEMQKHSLVLWPFHGVFGSGPTLDETFGLIDTAEKSAQVLVKVYSMGGMKQTISREELIALGQRFGVTPLASALAL</sequence>
<protein>
    <recommendedName>
        <fullName evidence="1">Rhamnulose-1-phosphate aldolase</fullName>
        <ecNumber evidence="1">4.1.2.19</ecNumber>
    </recommendedName>
</protein>
<feature type="chain" id="PRO_1000193725" description="Rhamnulose-1-phosphate aldolase">
    <location>
        <begin position="1"/>
        <end position="274"/>
    </location>
</feature>
<feature type="active site" evidence="1">
    <location>
        <position position="117"/>
    </location>
</feature>
<feature type="binding site" evidence="1">
    <location>
        <position position="141"/>
    </location>
    <ligand>
        <name>Zn(2+)</name>
        <dbReference type="ChEBI" id="CHEBI:29105"/>
    </ligand>
</feature>
<feature type="binding site" evidence="1">
    <location>
        <position position="143"/>
    </location>
    <ligand>
        <name>Zn(2+)</name>
        <dbReference type="ChEBI" id="CHEBI:29105"/>
    </ligand>
</feature>
<feature type="binding site" evidence="1">
    <location>
        <position position="212"/>
    </location>
    <ligand>
        <name>Zn(2+)</name>
        <dbReference type="ChEBI" id="CHEBI:29105"/>
    </ligand>
</feature>
<keyword id="KW-0963">Cytoplasm</keyword>
<keyword id="KW-0456">Lyase</keyword>
<keyword id="KW-0479">Metal-binding</keyword>
<keyword id="KW-0684">Rhamnose metabolism</keyword>
<keyword id="KW-0862">Zinc</keyword>
<accession>B7NFK0</accession>
<proteinExistence type="inferred from homology"/>
<name>RHAD_ECOLU</name>
<dbReference type="EC" id="4.1.2.19" evidence="1"/>
<dbReference type="EMBL" id="CU928163">
    <property type="protein sequence ID" value="CAR15557.1"/>
    <property type="molecule type" value="Genomic_DNA"/>
</dbReference>
<dbReference type="RefSeq" id="WP_001179732.1">
    <property type="nucleotide sequence ID" value="NC_011751.1"/>
</dbReference>
<dbReference type="RefSeq" id="YP_002415046.1">
    <property type="nucleotide sequence ID" value="NC_011751.1"/>
</dbReference>
<dbReference type="SMR" id="B7NFK0"/>
<dbReference type="STRING" id="585056.ECUMN_4430"/>
<dbReference type="KEGG" id="eum:ECUMN_4430"/>
<dbReference type="PATRIC" id="fig|585056.7.peg.4599"/>
<dbReference type="HOGENOM" id="CLU_076831_0_0_6"/>
<dbReference type="UniPathway" id="UPA00541">
    <property type="reaction ID" value="UER00603"/>
</dbReference>
<dbReference type="Proteomes" id="UP000007097">
    <property type="component" value="Chromosome"/>
</dbReference>
<dbReference type="GO" id="GO:0005829">
    <property type="term" value="C:cytosol"/>
    <property type="evidence" value="ECO:0007669"/>
    <property type="project" value="TreeGrafter"/>
</dbReference>
<dbReference type="GO" id="GO:0046872">
    <property type="term" value="F:metal ion binding"/>
    <property type="evidence" value="ECO:0007669"/>
    <property type="project" value="UniProtKB-KW"/>
</dbReference>
<dbReference type="GO" id="GO:0008994">
    <property type="term" value="F:rhamnulose-1-phosphate aldolase activity"/>
    <property type="evidence" value="ECO:0007669"/>
    <property type="project" value="UniProtKB-UniRule"/>
</dbReference>
<dbReference type="GO" id="GO:0019323">
    <property type="term" value="P:pentose catabolic process"/>
    <property type="evidence" value="ECO:0007669"/>
    <property type="project" value="TreeGrafter"/>
</dbReference>
<dbReference type="GO" id="GO:0019301">
    <property type="term" value="P:rhamnose catabolic process"/>
    <property type="evidence" value="ECO:0007669"/>
    <property type="project" value="UniProtKB-UniRule"/>
</dbReference>
<dbReference type="CDD" id="cd00398">
    <property type="entry name" value="Aldolase_II"/>
    <property type="match status" value="1"/>
</dbReference>
<dbReference type="FunFam" id="3.40.225.10:FF:000006">
    <property type="entry name" value="Rhamnulose-1-phosphate aldolase"/>
    <property type="match status" value="1"/>
</dbReference>
<dbReference type="Gene3D" id="3.40.225.10">
    <property type="entry name" value="Class II aldolase/adducin N-terminal domain"/>
    <property type="match status" value="1"/>
</dbReference>
<dbReference type="HAMAP" id="MF_00770">
    <property type="entry name" value="RhaD"/>
    <property type="match status" value="1"/>
</dbReference>
<dbReference type="InterPro" id="IPR050197">
    <property type="entry name" value="Aldolase_class_II_sugar_metab"/>
</dbReference>
<dbReference type="InterPro" id="IPR001303">
    <property type="entry name" value="Aldolase_II/adducin_N"/>
</dbReference>
<dbReference type="InterPro" id="IPR036409">
    <property type="entry name" value="Aldolase_II/adducin_N_sf"/>
</dbReference>
<dbReference type="InterPro" id="IPR013447">
    <property type="entry name" value="Rhamnulose-1-P_Aldolase"/>
</dbReference>
<dbReference type="NCBIfam" id="NF002963">
    <property type="entry name" value="PRK03634.1"/>
    <property type="match status" value="1"/>
</dbReference>
<dbReference type="NCBIfam" id="TIGR02624">
    <property type="entry name" value="rhamnu_1P_ald"/>
    <property type="match status" value="1"/>
</dbReference>
<dbReference type="PANTHER" id="PTHR22789">
    <property type="entry name" value="FUCULOSE PHOSPHATE ALDOLASE"/>
    <property type="match status" value="1"/>
</dbReference>
<dbReference type="PANTHER" id="PTHR22789:SF16">
    <property type="entry name" value="RHAMNULOSE-1-PHOSPHATE ALDOLASE"/>
    <property type="match status" value="1"/>
</dbReference>
<dbReference type="Pfam" id="PF00596">
    <property type="entry name" value="Aldolase_II"/>
    <property type="match status" value="1"/>
</dbReference>
<dbReference type="SMART" id="SM01007">
    <property type="entry name" value="Aldolase_II"/>
    <property type="match status" value="1"/>
</dbReference>
<dbReference type="SUPFAM" id="SSF53639">
    <property type="entry name" value="AraD/HMP-PK domain-like"/>
    <property type="match status" value="1"/>
</dbReference>
<reference key="1">
    <citation type="journal article" date="2009" name="PLoS Genet.">
        <title>Organised genome dynamics in the Escherichia coli species results in highly diverse adaptive paths.</title>
        <authorList>
            <person name="Touchon M."/>
            <person name="Hoede C."/>
            <person name="Tenaillon O."/>
            <person name="Barbe V."/>
            <person name="Baeriswyl S."/>
            <person name="Bidet P."/>
            <person name="Bingen E."/>
            <person name="Bonacorsi S."/>
            <person name="Bouchier C."/>
            <person name="Bouvet O."/>
            <person name="Calteau A."/>
            <person name="Chiapello H."/>
            <person name="Clermont O."/>
            <person name="Cruveiller S."/>
            <person name="Danchin A."/>
            <person name="Diard M."/>
            <person name="Dossat C."/>
            <person name="Karoui M.E."/>
            <person name="Frapy E."/>
            <person name="Garry L."/>
            <person name="Ghigo J.M."/>
            <person name="Gilles A.M."/>
            <person name="Johnson J."/>
            <person name="Le Bouguenec C."/>
            <person name="Lescat M."/>
            <person name="Mangenot S."/>
            <person name="Martinez-Jehanne V."/>
            <person name="Matic I."/>
            <person name="Nassif X."/>
            <person name="Oztas S."/>
            <person name="Petit M.A."/>
            <person name="Pichon C."/>
            <person name="Rouy Z."/>
            <person name="Ruf C.S."/>
            <person name="Schneider D."/>
            <person name="Tourret J."/>
            <person name="Vacherie B."/>
            <person name="Vallenet D."/>
            <person name="Medigue C."/>
            <person name="Rocha E.P.C."/>
            <person name="Denamur E."/>
        </authorList>
    </citation>
    <scope>NUCLEOTIDE SEQUENCE [LARGE SCALE GENOMIC DNA]</scope>
    <source>
        <strain>UMN026 / ExPEC</strain>
    </source>
</reference>
<gene>
    <name evidence="1" type="primary">rhaD</name>
    <name type="ordered locus">ECUMN_4430</name>
</gene>